<organism>
    <name type="scientific">Drosophila melanogaster</name>
    <name type="common">Fruit fly</name>
    <dbReference type="NCBI Taxonomy" id="7227"/>
    <lineage>
        <taxon>Eukaryota</taxon>
        <taxon>Metazoa</taxon>
        <taxon>Ecdysozoa</taxon>
        <taxon>Arthropoda</taxon>
        <taxon>Hexapoda</taxon>
        <taxon>Insecta</taxon>
        <taxon>Pterygota</taxon>
        <taxon>Neoptera</taxon>
        <taxon>Endopterygota</taxon>
        <taxon>Diptera</taxon>
        <taxon>Brachycera</taxon>
        <taxon>Muscomorpha</taxon>
        <taxon>Ephydroidea</taxon>
        <taxon>Drosophilidae</taxon>
        <taxon>Drosophila</taxon>
        <taxon>Sophophora</taxon>
    </lineage>
</organism>
<name>RT06_DROME</name>
<feature type="chain" id="PRO_0000176894" description="Small ribosomal subunit protein bS6m">
    <location>
        <begin position="1"/>
        <end position="147"/>
    </location>
</feature>
<gene>
    <name type="primary">mRpS6</name>
    <name type="ORF">CG15016</name>
</gene>
<dbReference type="EMBL" id="AE014296">
    <property type="protein sequence ID" value="AAF47889.1"/>
    <property type="molecule type" value="Genomic_DNA"/>
</dbReference>
<dbReference type="EMBL" id="AY070674">
    <property type="protein sequence ID" value="AAL48145.1"/>
    <property type="molecule type" value="mRNA"/>
</dbReference>
<dbReference type="RefSeq" id="NP_001246623.1">
    <property type="nucleotide sequence ID" value="NM_001259694.2"/>
</dbReference>
<dbReference type="RefSeq" id="NP_523925.1">
    <property type="nucleotide sequence ID" value="NM_079201.5"/>
</dbReference>
<dbReference type="SMR" id="Q9VZD5"/>
<dbReference type="BioGRID" id="64012">
    <property type="interactions" value="4"/>
</dbReference>
<dbReference type="DIP" id="DIP-19616N"/>
<dbReference type="FunCoup" id="Q9VZD5">
    <property type="interactions" value="596"/>
</dbReference>
<dbReference type="IntAct" id="Q9VZD5">
    <property type="interactions" value="36"/>
</dbReference>
<dbReference type="STRING" id="7227.FBpp0297230"/>
<dbReference type="PaxDb" id="7227-FBpp0073144"/>
<dbReference type="DNASU" id="38535"/>
<dbReference type="EnsemblMetazoa" id="FBtr0073288">
    <property type="protein sequence ID" value="FBpp0073144"/>
    <property type="gene ID" value="FBgn0035534"/>
</dbReference>
<dbReference type="EnsemblMetazoa" id="FBtr0306093">
    <property type="protein sequence ID" value="FBpp0297230"/>
    <property type="gene ID" value="FBgn0035534"/>
</dbReference>
<dbReference type="GeneID" id="38535"/>
<dbReference type="KEGG" id="dme:Dmel_CG15016"/>
<dbReference type="AGR" id="FB:FBgn0035534"/>
<dbReference type="CTD" id="64968"/>
<dbReference type="FlyBase" id="FBgn0035534">
    <property type="gene designation" value="mRpS6"/>
</dbReference>
<dbReference type="VEuPathDB" id="VectorBase:FBgn0035534"/>
<dbReference type="eggNOG" id="KOG4708">
    <property type="taxonomic scope" value="Eukaryota"/>
</dbReference>
<dbReference type="GeneTree" id="ENSGT01120000274980"/>
<dbReference type="HOGENOM" id="CLU_126331_4_1_1"/>
<dbReference type="InParanoid" id="Q9VZD5"/>
<dbReference type="OMA" id="NAGVNEC"/>
<dbReference type="OrthoDB" id="268530at2759"/>
<dbReference type="PhylomeDB" id="Q9VZD5"/>
<dbReference type="Reactome" id="R-DME-5389840">
    <property type="pathway name" value="Mitochondrial translation elongation"/>
</dbReference>
<dbReference type="Reactome" id="R-DME-5419276">
    <property type="pathway name" value="Mitochondrial translation termination"/>
</dbReference>
<dbReference type="BioGRID-ORCS" id="38535">
    <property type="hits" value="0 hits in 1 CRISPR screen"/>
</dbReference>
<dbReference type="GenomeRNAi" id="38535"/>
<dbReference type="PRO" id="PR:Q9VZD5"/>
<dbReference type="Proteomes" id="UP000000803">
    <property type="component" value="Chromosome 3L"/>
</dbReference>
<dbReference type="Bgee" id="FBgn0035534">
    <property type="expression patterns" value="Expressed in enteroblast (Drosophila) in digestive tract and 126 other cell types or tissues"/>
</dbReference>
<dbReference type="ExpressionAtlas" id="Q9VZD5">
    <property type="expression patterns" value="baseline and differential"/>
</dbReference>
<dbReference type="GO" id="GO:0005763">
    <property type="term" value="C:mitochondrial small ribosomal subunit"/>
    <property type="evidence" value="ECO:0000250"/>
    <property type="project" value="UniProtKB"/>
</dbReference>
<dbReference type="GO" id="GO:0070181">
    <property type="term" value="F:small ribosomal subunit rRNA binding"/>
    <property type="evidence" value="ECO:0000318"/>
    <property type="project" value="GO_Central"/>
</dbReference>
<dbReference type="GO" id="GO:0003735">
    <property type="term" value="F:structural constituent of ribosome"/>
    <property type="evidence" value="ECO:0000250"/>
    <property type="project" value="UniProtKB"/>
</dbReference>
<dbReference type="GO" id="GO:0032543">
    <property type="term" value="P:mitochondrial translation"/>
    <property type="evidence" value="ECO:0000250"/>
    <property type="project" value="UniProtKB"/>
</dbReference>
<dbReference type="CDD" id="cd15465">
    <property type="entry name" value="bS6_mito"/>
    <property type="match status" value="1"/>
</dbReference>
<dbReference type="FunFam" id="3.30.70.60:FF:000014">
    <property type="entry name" value="28S ribosomal protein S6, mitochondrial"/>
    <property type="match status" value="1"/>
</dbReference>
<dbReference type="Gene3D" id="3.30.70.60">
    <property type="match status" value="1"/>
</dbReference>
<dbReference type="InterPro" id="IPR000529">
    <property type="entry name" value="Ribosomal_bS6"/>
</dbReference>
<dbReference type="InterPro" id="IPR035980">
    <property type="entry name" value="Ribosomal_bS6_sf"/>
</dbReference>
<dbReference type="InterPro" id="IPR014717">
    <property type="entry name" value="Transl_elong_EF1B/ribsomal_bS6"/>
</dbReference>
<dbReference type="PANTHER" id="PTHR21011">
    <property type="entry name" value="MITOCHONDRIAL 28S RIBOSOMAL PROTEIN S6"/>
    <property type="match status" value="1"/>
</dbReference>
<dbReference type="PANTHER" id="PTHR21011:SF1">
    <property type="entry name" value="SMALL RIBOSOMAL SUBUNIT PROTEIN BS6M"/>
    <property type="match status" value="1"/>
</dbReference>
<dbReference type="Pfam" id="PF01250">
    <property type="entry name" value="Ribosomal_S6"/>
    <property type="match status" value="1"/>
</dbReference>
<dbReference type="SUPFAM" id="SSF54995">
    <property type="entry name" value="Ribosomal protein S6"/>
    <property type="match status" value="1"/>
</dbReference>
<sequence>MPSYELALVLRQLPRPELISVIRRTAESILDKGGIIRKLENLGSRALPHKVSEHGVVHREGTHFTIAFDTAPTKIADLKEEFGRDIDIIRRYIFKVEEPEQKPCTLHEEMLPPAYRKDVQEIIAAAQKKQKKKFNYNSGLDYYPFQK</sequence>
<reference key="1">
    <citation type="journal article" date="2000" name="Science">
        <title>The genome sequence of Drosophila melanogaster.</title>
        <authorList>
            <person name="Adams M.D."/>
            <person name="Celniker S.E."/>
            <person name="Holt R.A."/>
            <person name="Evans C.A."/>
            <person name="Gocayne J.D."/>
            <person name="Amanatides P.G."/>
            <person name="Scherer S.E."/>
            <person name="Li P.W."/>
            <person name="Hoskins R.A."/>
            <person name="Galle R.F."/>
            <person name="George R.A."/>
            <person name="Lewis S.E."/>
            <person name="Richards S."/>
            <person name="Ashburner M."/>
            <person name="Henderson S.N."/>
            <person name="Sutton G.G."/>
            <person name="Wortman J.R."/>
            <person name="Yandell M.D."/>
            <person name="Zhang Q."/>
            <person name="Chen L.X."/>
            <person name="Brandon R.C."/>
            <person name="Rogers Y.-H.C."/>
            <person name="Blazej R.G."/>
            <person name="Champe M."/>
            <person name="Pfeiffer B.D."/>
            <person name="Wan K.H."/>
            <person name="Doyle C."/>
            <person name="Baxter E.G."/>
            <person name="Helt G."/>
            <person name="Nelson C.R."/>
            <person name="Miklos G.L.G."/>
            <person name="Abril J.F."/>
            <person name="Agbayani A."/>
            <person name="An H.-J."/>
            <person name="Andrews-Pfannkoch C."/>
            <person name="Baldwin D."/>
            <person name="Ballew R.M."/>
            <person name="Basu A."/>
            <person name="Baxendale J."/>
            <person name="Bayraktaroglu L."/>
            <person name="Beasley E.M."/>
            <person name="Beeson K.Y."/>
            <person name="Benos P.V."/>
            <person name="Berman B.P."/>
            <person name="Bhandari D."/>
            <person name="Bolshakov S."/>
            <person name="Borkova D."/>
            <person name="Botchan M.R."/>
            <person name="Bouck J."/>
            <person name="Brokstein P."/>
            <person name="Brottier P."/>
            <person name="Burtis K.C."/>
            <person name="Busam D.A."/>
            <person name="Butler H."/>
            <person name="Cadieu E."/>
            <person name="Center A."/>
            <person name="Chandra I."/>
            <person name="Cherry J.M."/>
            <person name="Cawley S."/>
            <person name="Dahlke C."/>
            <person name="Davenport L.B."/>
            <person name="Davies P."/>
            <person name="de Pablos B."/>
            <person name="Delcher A."/>
            <person name="Deng Z."/>
            <person name="Mays A.D."/>
            <person name="Dew I."/>
            <person name="Dietz S.M."/>
            <person name="Dodson K."/>
            <person name="Doup L.E."/>
            <person name="Downes M."/>
            <person name="Dugan-Rocha S."/>
            <person name="Dunkov B.C."/>
            <person name="Dunn P."/>
            <person name="Durbin K.J."/>
            <person name="Evangelista C.C."/>
            <person name="Ferraz C."/>
            <person name="Ferriera S."/>
            <person name="Fleischmann W."/>
            <person name="Fosler C."/>
            <person name="Gabrielian A.E."/>
            <person name="Garg N.S."/>
            <person name="Gelbart W.M."/>
            <person name="Glasser K."/>
            <person name="Glodek A."/>
            <person name="Gong F."/>
            <person name="Gorrell J.H."/>
            <person name="Gu Z."/>
            <person name="Guan P."/>
            <person name="Harris M."/>
            <person name="Harris N.L."/>
            <person name="Harvey D.A."/>
            <person name="Heiman T.J."/>
            <person name="Hernandez J.R."/>
            <person name="Houck J."/>
            <person name="Hostin D."/>
            <person name="Houston K.A."/>
            <person name="Howland T.J."/>
            <person name="Wei M.-H."/>
            <person name="Ibegwam C."/>
            <person name="Jalali M."/>
            <person name="Kalush F."/>
            <person name="Karpen G.H."/>
            <person name="Ke Z."/>
            <person name="Kennison J.A."/>
            <person name="Ketchum K.A."/>
            <person name="Kimmel B.E."/>
            <person name="Kodira C.D."/>
            <person name="Kraft C.L."/>
            <person name="Kravitz S."/>
            <person name="Kulp D."/>
            <person name="Lai Z."/>
            <person name="Lasko P."/>
            <person name="Lei Y."/>
            <person name="Levitsky A.A."/>
            <person name="Li J.H."/>
            <person name="Li Z."/>
            <person name="Liang Y."/>
            <person name="Lin X."/>
            <person name="Liu X."/>
            <person name="Mattei B."/>
            <person name="McIntosh T.C."/>
            <person name="McLeod M.P."/>
            <person name="McPherson D."/>
            <person name="Merkulov G."/>
            <person name="Milshina N.V."/>
            <person name="Mobarry C."/>
            <person name="Morris J."/>
            <person name="Moshrefi A."/>
            <person name="Mount S.M."/>
            <person name="Moy M."/>
            <person name="Murphy B."/>
            <person name="Murphy L."/>
            <person name="Muzny D.M."/>
            <person name="Nelson D.L."/>
            <person name="Nelson D.R."/>
            <person name="Nelson K.A."/>
            <person name="Nixon K."/>
            <person name="Nusskern D.R."/>
            <person name="Pacleb J.M."/>
            <person name="Palazzolo M."/>
            <person name="Pittman G.S."/>
            <person name="Pan S."/>
            <person name="Pollard J."/>
            <person name="Puri V."/>
            <person name="Reese M.G."/>
            <person name="Reinert K."/>
            <person name="Remington K."/>
            <person name="Saunders R.D.C."/>
            <person name="Scheeler F."/>
            <person name="Shen H."/>
            <person name="Shue B.C."/>
            <person name="Siden-Kiamos I."/>
            <person name="Simpson M."/>
            <person name="Skupski M.P."/>
            <person name="Smith T.J."/>
            <person name="Spier E."/>
            <person name="Spradling A.C."/>
            <person name="Stapleton M."/>
            <person name="Strong R."/>
            <person name="Sun E."/>
            <person name="Svirskas R."/>
            <person name="Tector C."/>
            <person name="Turner R."/>
            <person name="Venter E."/>
            <person name="Wang A.H."/>
            <person name="Wang X."/>
            <person name="Wang Z.-Y."/>
            <person name="Wassarman D.A."/>
            <person name="Weinstock G.M."/>
            <person name="Weissenbach J."/>
            <person name="Williams S.M."/>
            <person name="Woodage T."/>
            <person name="Worley K.C."/>
            <person name="Wu D."/>
            <person name="Yang S."/>
            <person name="Yao Q.A."/>
            <person name="Ye J."/>
            <person name="Yeh R.-F."/>
            <person name="Zaveri J.S."/>
            <person name="Zhan M."/>
            <person name="Zhang G."/>
            <person name="Zhao Q."/>
            <person name="Zheng L."/>
            <person name="Zheng X.H."/>
            <person name="Zhong F.N."/>
            <person name="Zhong W."/>
            <person name="Zhou X."/>
            <person name="Zhu S.C."/>
            <person name="Zhu X."/>
            <person name="Smith H.O."/>
            <person name="Gibbs R.A."/>
            <person name="Myers E.W."/>
            <person name="Rubin G.M."/>
            <person name="Venter J.C."/>
        </authorList>
    </citation>
    <scope>NUCLEOTIDE SEQUENCE [LARGE SCALE GENOMIC DNA]</scope>
    <source>
        <strain>Berkeley</strain>
    </source>
</reference>
<reference key="2">
    <citation type="journal article" date="2002" name="Genome Biol.">
        <title>Annotation of the Drosophila melanogaster euchromatic genome: a systematic review.</title>
        <authorList>
            <person name="Misra S."/>
            <person name="Crosby M.A."/>
            <person name="Mungall C.J."/>
            <person name="Matthews B.B."/>
            <person name="Campbell K.S."/>
            <person name="Hradecky P."/>
            <person name="Huang Y."/>
            <person name="Kaminker J.S."/>
            <person name="Millburn G.H."/>
            <person name="Prochnik S.E."/>
            <person name="Smith C.D."/>
            <person name="Tupy J.L."/>
            <person name="Whitfield E.J."/>
            <person name="Bayraktaroglu L."/>
            <person name="Berman B.P."/>
            <person name="Bettencourt B.R."/>
            <person name="Celniker S.E."/>
            <person name="de Grey A.D.N.J."/>
            <person name="Drysdale R.A."/>
            <person name="Harris N.L."/>
            <person name="Richter J."/>
            <person name="Russo S."/>
            <person name="Schroeder A.J."/>
            <person name="Shu S.Q."/>
            <person name="Stapleton M."/>
            <person name="Yamada C."/>
            <person name="Ashburner M."/>
            <person name="Gelbart W.M."/>
            <person name="Rubin G.M."/>
            <person name="Lewis S.E."/>
        </authorList>
    </citation>
    <scope>GENOME REANNOTATION</scope>
    <source>
        <strain>Berkeley</strain>
    </source>
</reference>
<reference key="3">
    <citation type="journal article" date="2002" name="Genome Biol.">
        <title>A Drosophila full-length cDNA resource.</title>
        <authorList>
            <person name="Stapleton M."/>
            <person name="Carlson J.W."/>
            <person name="Brokstein P."/>
            <person name="Yu C."/>
            <person name="Champe M."/>
            <person name="George R.A."/>
            <person name="Guarin H."/>
            <person name="Kronmiller B."/>
            <person name="Pacleb J.M."/>
            <person name="Park S."/>
            <person name="Wan K.H."/>
            <person name="Rubin G.M."/>
            <person name="Celniker S.E."/>
        </authorList>
    </citation>
    <scope>NUCLEOTIDE SEQUENCE [LARGE SCALE MRNA]</scope>
    <source>
        <strain>Berkeley</strain>
        <tissue>Head</tissue>
    </source>
</reference>
<evidence type="ECO:0000250" key="1">
    <source>
        <dbReference type="UniProtKB" id="P82932"/>
    </source>
</evidence>
<evidence type="ECO:0000305" key="2"/>
<protein>
    <recommendedName>
        <fullName evidence="2">Small ribosomal subunit protein bS6m</fullName>
    </recommendedName>
    <alternativeName>
        <fullName evidence="2">28S ribosomal protein S6, mitochondrial</fullName>
        <shortName>MRP-S6</shortName>
        <shortName>S6mt</shortName>
    </alternativeName>
</protein>
<comment type="subunit">
    <text evidence="1">Component of the mitochondrial ribosome small subunit (28S) which comprises a 12S rRNA and about 30 distinct proteins.</text>
</comment>
<comment type="subcellular location">
    <subcellularLocation>
        <location evidence="1">Mitochondrion</location>
    </subcellularLocation>
</comment>
<comment type="similarity">
    <text evidence="2">Belongs to the bacterial ribosomal protein bS6 family.</text>
</comment>
<keyword id="KW-0496">Mitochondrion</keyword>
<keyword id="KW-1185">Reference proteome</keyword>
<keyword id="KW-0687">Ribonucleoprotein</keyword>
<keyword id="KW-0689">Ribosomal protein</keyword>
<accession>Q9VZD5</accession>
<proteinExistence type="evidence at transcript level"/>